<keyword id="KW-0012">Acyltransferase</keyword>
<keyword id="KW-0133">Cell shape</keyword>
<keyword id="KW-0961">Cell wall biogenesis/degradation</keyword>
<keyword id="KW-0963">Cytoplasm</keyword>
<keyword id="KW-0460">Magnesium</keyword>
<keyword id="KW-0479">Metal-binding</keyword>
<keyword id="KW-0511">Multifunctional enzyme</keyword>
<keyword id="KW-0548">Nucleotidyltransferase</keyword>
<keyword id="KW-0573">Peptidoglycan synthesis</keyword>
<keyword id="KW-1185">Reference proteome</keyword>
<keyword id="KW-0677">Repeat</keyword>
<keyword id="KW-0808">Transferase</keyword>
<feature type="chain" id="PRO_1000186443" description="Bifunctional protein GlmU">
    <location>
        <begin position="1"/>
        <end position="456"/>
    </location>
</feature>
<feature type="region of interest" description="Pyrophosphorylase" evidence="1">
    <location>
        <begin position="1"/>
        <end position="229"/>
    </location>
</feature>
<feature type="region of interest" description="Linker" evidence="1">
    <location>
        <begin position="230"/>
        <end position="250"/>
    </location>
</feature>
<feature type="region of interest" description="N-acetyltransferase" evidence="1">
    <location>
        <begin position="251"/>
        <end position="456"/>
    </location>
</feature>
<feature type="active site" description="Proton acceptor" evidence="1">
    <location>
        <position position="363"/>
    </location>
</feature>
<feature type="binding site" evidence="1">
    <location>
        <begin position="11"/>
        <end position="14"/>
    </location>
    <ligand>
        <name>UDP-N-acetyl-alpha-D-glucosamine</name>
        <dbReference type="ChEBI" id="CHEBI:57705"/>
    </ligand>
</feature>
<feature type="binding site" evidence="1">
    <location>
        <position position="25"/>
    </location>
    <ligand>
        <name>UDP-N-acetyl-alpha-D-glucosamine</name>
        <dbReference type="ChEBI" id="CHEBI:57705"/>
    </ligand>
</feature>
<feature type="binding site" evidence="1">
    <location>
        <position position="76"/>
    </location>
    <ligand>
        <name>UDP-N-acetyl-alpha-D-glucosamine</name>
        <dbReference type="ChEBI" id="CHEBI:57705"/>
    </ligand>
</feature>
<feature type="binding site" evidence="1">
    <location>
        <begin position="81"/>
        <end position="82"/>
    </location>
    <ligand>
        <name>UDP-N-acetyl-alpha-D-glucosamine</name>
        <dbReference type="ChEBI" id="CHEBI:57705"/>
    </ligand>
</feature>
<feature type="binding site" evidence="1">
    <location>
        <begin position="103"/>
        <end position="105"/>
    </location>
    <ligand>
        <name>UDP-N-acetyl-alpha-D-glucosamine</name>
        <dbReference type="ChEBI" id="CHEBI:57705"/>
    </ligand>
</feature>
<feature type="binding site" evidence="1">
    <location>
        <position position="105"/>
    </location>
    <ligand>
        <name>Mg(2+)</name>
        <dbReference type="ChEBI" id="CHEBI:18420"/>
    </ligand>
</feature>
<feature type="binding site" evidence="1">
    <location>
        <position position="140"/>
    </location>
    <ligand>
        <name>UDP-N-acetyl-alpha-D-glucosamine</name>
        <dbReference type="ChEBI" id="CHEBI:57705"/>
    </ligand>
</feature>
<feature type="binding site" evidence="1">
    <location>
        <position position="154"/>
    </location>
    <ligand>
        <name>UDP-N-acetyl-alpha-D-glucosamine</name>
        <dbReference type="ChEBI" id="CHEBI:57705"/>
    </ligand>
</feature>
<feature type="binding site" evidence="1">
    <location>
        <position position="169"/>
    </location>
    <ligand>
        <name>UDP-N-acetyl-alpha-D-glucosamine</name>
        <dbReference type="ChEBI" id="CHEBI:57705"/>
    </ligand>
</feature>
<feature type="binding site" evidence="1">
    <location>
        <position position="227"/>
    </location>
    <ligand>
        <name>Mg(2+)</name>
        <dbReference type="ChEBI" id="CHEBI:18420"/>
    </ligand>
</feature>
<feature type="binding site" evidence="1">
    <location>
        <position position="227"/>
    </location>
    <ligand>
        <name>UDP-N-acetyl-alpha-D-glucosamine</name>
        <dbReference type="ChEBI" id="CHEBI:57705"/>
    </ligand>
</feature>
<feature type="binding site" evidence="1">
    <location>
        <position position="333"/>
    </location>
    <ligand>
        <name>UDP-N-acetyl-alpha-D-glucosamine</name>
        <dbReference type="ChEBI" id="CHEBI:57705"/>
    </ligand>
</feature>
<feature type="binding site" evidence="1">
    <location>
        <position position="351"/>
    </location>
    <ligand>
        <name>UDP-N-acetyl-alpha-D-glucosamine</name>
        <dbReference type="ChEBI" id="CHEBI:57705"/>
    </ligand>
</feature>
<feature type="binding site" evidence="1">
    <location>
        <position position="366"/>
    </location>
    <ligand>
        <name>UDP-N-acetyl-alpha-D-glucosamine</name>
        <dbReference type="ChEBI" id="CHEBI:57705"/>
    </ligand>
</feature>
<feature type="binding site" evidence="1">
    <location>
        <position position="377"/>
    </location>
    <ligand>
        <name>UDP-N-acetyl-alpha-D-glucosamine</name>
        <dbReference type="ChEBI" id="CHEBI:57705"/>
    </ligand>
</feature>
<feature type="binding site" evidence="1">
    <location>
        <position position="380"/>
    </location>
    <ligand>
        <name>acetyl-CoA</name>
        <dbReference type="ChEBI" id="CHEBI:57288"/>
    </ligand>
</feature>
<feature type="binding site" evidence="1">
    <location>
        <begin position="386"/>
        <end position="387"/>
    </location>
    <ligand>
        <name>acetyl-CoA</name>
        <dbReference type="ChEBI" id="CHEBI:57288"/>
    </ligand>
</feature>
<feature type="binding site" evidence="1">
    <location>
        <position position="405"/>
    </location>
    <ligand>
        <name>acetyl-CoA</name>
        <dbReference type="ChEBI" id="CHEBI:57288"/>
    </ligand>
</feature>
<feature type="binding site" evidence="1">
    <location>
        <position position="423"/>
    </location>
    <ligand>
        <name>acetyl-CoA</name>
        <dbReference type="ChEBI" id="CHEBI:57288"/>
    </ligand>
</feature>
<feature type="binding site" evidence="1">
    <location>
        <position position="440"/>
    </location>
    <ligand>
        <name>acetyl-CoA</name>
        <dbReference type="ChEBI" id="CHEBI:57288"/>
    </ligand>
</feature>
<accession>B7L878</accession>
<evidence type="ECO:0000255" key="1">
    <source>
        <dbReference type="HAMAP-Rule" id="MF_01631"/>
    </source>
</evidence>
<reference key="1">
    <citation type="journal article" date="2009" name="PLoS Genet.">
        <title>Organised genome dynamics in the Escherichia coli species results in highly diverse adaptive paths.</title>
        <authorList>
            <person name="Touchon M."/>
            <person name="Hoede C."/>
            <person name="Tenaillon O."/>
            <person name="Barbe V."/>
            <person name="Baeriswyl S."/>
            <person name="Bidet P."/>
            <person name="Bingen E."/>
            <person name="Bonacorsi S."/>
            <person name="Bouchier C."/>
            <person name="Bouvet O."/>
            <person name="Calteau A."/>
            <person name="Chiapello H."/>
            <person name="Clermont O."/>
            <person name="Cruveiller S."/>
            <person name="Danchin A."/>
            <person name="Diard M."/>
            <person name="Dossat C."/>
            <person name="Karoui M.E."/>
            <person name="Frapy E."/>
            <person name="Garry L."/>
            <person name="Ghigo J.M."/>
            <person name="Gilles A.M."/>
            <person name="Johnson J."/>
            <person name="Le Bouguenec C."/>
            <person name="Lescat M."/>
            <person name="Mangenot S."/>
            <person name="Martinez-Jehanne V."/>
            <person name="Matic I."/>
            <person name="Nassif X."/>
            <person name="Oztas S."/>
            <person name="Petit M.A."/>
            <person name="Pichon C."/>
            <person name="Rouy Z."/>
            <person name="Ruf C.S."/>
            <person name="Schneider D."/>
            <person name="Tourret J."/>
            <person name="Vacherie B."/>
            <person name="Vallenet D."/>
            <person name="Medigue C."/>
            <person name="Rocha E.P.C."/>
            <person name="Denamur E."/>
        </authorList>
    </citation>
    <scope>NUCLEOTIDE SEQUENCE [LARGE SCALE GENOMIC DNA]</scope>
    <source>
        <strain>55989 / EAEC</strain>
    </source>
</reference>
<proteinExistence type="inferred from homology"/>
<name>GLMU_ECO55</name>
<sequence length="456" mass="49175">MLNNAMSVVILAAGKGTRMYSDLPKVLHTLAGKAMVQHVIDAANELGAAHVHLVYGHGGDLLKQALKDDNLNWVLQAEQLGTGHAMQQAAPFFADDEDILMLYGDVPLISVETLQRLRDAKPQGGIGLLTVKLDDPTGYGRITRENGKVTGIVEHKDATDELRQIQEINTGILIANGADMKRWLAKLTNNNAQGEYYITDIIALAYQEGREIVAVHPQRLSEVEGVNNRLQLSRLERVYQSEQAEKLLLAGVMLRDPARFDLRGTLTHGRDVEIDTNVIIEGNVTLGHRVKIGTGCVIKNSVIGDDCEISPYTVVEDANLAAACTIGPFARLRPGAELLEGAHVGNFVEMKKARLGKGSKAGHLTYLGDAEIGDNVNIGAGTITCNYDGANKFKTIIGDDVFVGSDTQLVAPVTVGKGATIAAGTTVTRNVGENALAISRVPQTQKEGWRRPVKKK</sequence>
<comment type="function">
    <text evidence="1">Catalyzes the last two sequential reactions in the de novo biosynthetic pathway for UDP-N-acetylglucosamine (UDP-GlcNAc). The C-terminal domain catalyzes the transfer of acetyl group from acetyl coenzyme A to glucosamine-1-phosphate (GlcN-1-P) to produce N-acetylglucosamine-1-phosphate (GlcNAc-1-P), which is converted into UDP-GlcNAc by the transfer of uridine 5-monophosphate (from uridine 5-triphosphate), a reaction catalyzed by the N-terminal domain.</text>
</comment>
<comment type="catalytic activity">
    <reaction evidence="1">
        <text>alpha-D-glucosamine 1-phosphate + acetyl-CoA = N-acetyl-alpha-D-glucosamine 1-phosphate + CoA + H(+)</text>
        <dbReference type="Rhea" id="RHEA:13725"/>
        <dbReference type="ChEBI" id="CHEBI:15378"/>
        <dbReference type="ChEBI" id="CHEBI:57287"/>
        <dbReference type="ChEBI" id="CHEBI:57288"/>
        <dbReference type="ChEBI" id="CHEBI:57776"/>
        <dbReference type="ChEBI" id="CHEBI:58516"/>
        <dbReference type="EC" id="2.3.1.157"/>
    </reaction>
</comment>
<comment type="catalytic activity">
    <reaction evidence="1">
        <text>N-acetyl-alpha-D-glucosamine 1-phosphate + UTP + H(+) = UDP-N-acetyl-alpha-D-glucosamine + diphosphate</text>
        <dbReference type="Rhea" id="RHEA:13509"/>
        <dbReference type="ChEBI" id="CHEBI:15378"/>
        <dbReference type="ChEBI" id="CHEBI:33019"/>
        <dbReference type="ChEBI" id="CHEBI:46398"/>
        <dbReference type="ChEBI" id="CHEBI:57705"/>
        <dbReference type="ChEBI" id="CHEBI:57776"/>
        <dbReference type="EC" id="2.7.7.23"/>
    </reaction>
</comment>
<comment type="cofactor">
    <cofactor evidence="1">
        <name>Mg(2+)</name>
        <dbReference type="ChEBI" id="CHEBI:18420"/>
    </cofactor>
    <text evidence="1">Binds 1 Mg(2+) ion per subunit.</text>
</comment>
<comment type="pathway">
    <text evidence="1">Nucleotide-sugar biosynthesis; UDP-N-acetyl-alpha-D-glucosamine biosynthesis; N-acetyl-alpha-D-glucosamine 1-phosphate from alpha-D-glucosamine 6-phosphate (route II): step 2/2.</text>
</comment>
<comment type="pathway">
    <text evidence="1">Nucleotide-sugar biosynthesis; UDP-N-acetyl-alpha-D-glucosamine biosynthesis; UDP-N-acetyl-alpha-D-glucosamine from N-acetyl-alpha-D-glucosamine 1-phosphate: step 1/1.</text>
</comment>
<comment type="pathway">
    <text evidence="1">Bacterial outer membrane biogenesis; LPS lipid A biosynthesis.</text>
</comment>
<comment type="subunit">
    <text evidence="1">Homotrimer.</text>
</comment>
<comment type="subcellular location">
    <subcellularLocation>
        <location evidence="1">Cytoplasm</location>
    </subcellularLocation>
</comment>
<comment type="similarity">
    <text evidence="1">In the N-terminal section; belongs to the N-acetylglucosamine-1-phosphate uridyltransferase family.</text>
</comment>
<comment type="similarity">
    <text evidence="1">In the C-terminal section; belongs to the transferase hexapeptide repeat family.</text>
</comment>
<protein>
    <recommendedName>
        <fullName evidence="1">Bifunctional protein GlmU</fullName>
    </recommendedName>
    <domain>
        <recommendedName>
            <fullName evidence="1">UDP-N-acetylglucosamine pyrophosphorylase</fullName>
            <ecNumber evidence="1">2.7.7.23</ecNumber>
        </recommendedName>
        <alternativeName>
            <fullName evidence="1">N-acetylglucosamine-1-phosphate uridyltransferase</fullName>
        </alternativeName>
    </domain>
    <domain>
        <recommendedName>
            <fullName evidence="1">Glucosamine-1-phosphate N-acetyltransferase</fullName>
            <ecNumber evidence="1">2.3.1.157</ecNumber>
        </recommendedName>
    </domain>
</protein>
<organism>
    <name type="scientific">Escherichia coli (strain 55989 / EAEC)</name>
    <dbReference type="NCBI Taxonomy" id="585055"/>
    <lineage>
        <taxon>Bacteria</taxon>
        <taxon>Pseudomonadati</taxon>
        <taxon>Pseudomonadota</taxon>
        <taxon>Gammaproteobacteria</taxon>
        <taxon>Enterobacterales</taxon>
        <taxon>Enterobacteriaceae</taxon>
        <taxon>Escherichia</taxon>
    </lineage>
</organism>
<gene>
    <name evidence="1" type="primary">glmU</name>
    <name type="ordered locus">EC55989_4205</name>
</gene>
<dbReference type="EC" id="2.7.7.23" evidence="1"/>
<dbReference type="EC" id="2.3.1.157" evidence="1"/>
<dbReference type="EMBL" id="CU928145">
    <property type="protein sequence ID" value="CAV00815.1"/>
    <property type="molecule type" value="Genomic_DNA"/>
</dbReference>
<dbReference type="RefSeq" id="WP_000933720.1">
    <property type="nucleotide sequence ID" value="NC_011748.1"/>
</dbReference>
<dbReference type="SMR" id="B7L878"/>
<dbReference type="KEGG" id="eck:EC55989_4205"/>
<dbReference type="HOGENOM" id="CLU_029499_15_2_6"/>
<dbReference type="UniPathway" id="UPA00113">
    <property type="reaction ID" value="UER00532"/>
</dbReference>
<dbReference type="UniPathway" id="UPA00113">
    <property type="reaction ID" value="UER00533"/>
</dbReference>
<dbReference type="UniPathway" id="UPA00973"/>
<dbReference type="Proteomes" id="UP000000746">
    <property type="component" value="Chromosome"/>
</dbReference>
<dbReference type="GO" id="GO:0005737">
    <property type="term" value="C:cytoplasm"/>
    <property type="evidence" value="ECO:0007669"/>
    <property type="project" value="UniProtKB-SubCell"/>
</dbReference>
<dbReference type="GO" id="GO:0016020">
    <property type="term" value="C:membrane"/>
    <property type="evidence" value="ECO:0007669"/>
    <property type="project" value="GOC"/>
</dbReference>
<dbReference type="GO" id="GO:0019134">
    <property type="term" value="F:glucosamine-1-phosphate N-acetyltransferase activity"/>
    <property type="evidence" value="ECO:0007669"/>
    <property type="project" value="UniProtKB-UniRule"/>
</dbReference>
<dbReference type="GO" id="GO:0000287">
    <property type="term" value="F:magnesium ion binding"/>
    <property type="evidence" value="ECO:0007669"/>
    <property type="project" value="UniProtKB-UniRule"/>
</dbReference>
<dbReference type="GO" id="GO:0003977">
    <property type="term" value="F:UDP-N-acetylglucosamine diphosphorylase activity"/>
    <property type="evidence" value="ECO:0007669"/>
    <property type="project" value="UniProtKB-UniRule"/>
</dbReference>
<dbReference type="GO" id="GO:0000902">
    <property type="term" value="P:cell morphogenesis"/>
    <property type="evidence" value="ECO:0007669"/>
    <property type="project" value="UniProtKB-UniRule"/>
</dbReference>
<dbReference type="GO" id="GO:0071555">
    <property type="term" value="P:cell wall organization"/>
    <property type="evidence" value="ECO:0007669"/>
    <property type="project" value="UniProtKB-KW"/>
</dbReference>
<dbReference type="GO" id="GO:0009245">
    <property type="term" value="P:lipid A biosynthetic process"/>
    <property type="evidence" value="ECO:0007669"/>
    <property type="project" value="UniProtKB-UniRule"/>
</dbReference>
<dbReference type="GO" id="GO:0009252">
    <property type="term" value="P:peptidoglycan biosynthetic process"/>
    <property type="evidence" value="ECO:0007669"/>
    <property type="project" value="UniProtKB-UniRule"/>
</dbReference>
<dbReference type="GO" id="GO:0008360">
    <property type="term" value="P:regulation of cell shape"/>
    <property type="evidence" value="ECO:0007669"/>
    <property type="project" value="UniProtKB-KW"/>
</dbReference>
<dbReference type="GO" id="GO:0006048">
    <property type="term" value="P:UDP-N-acetylglucosamine biosynthetic process"/>
    <property type="evidence" value="ECO:0007669"/>
    <property type="project" value="UniProtKB-UniPathway"/>
</dbReference>
<dbReference type="CDD" id="cd02540">
    <property type="entry name" value="GT2_GlmU_N_bac"/>
    <property type="match status" value="1"/>
</dbReference>
<dbReference type="CDD" id="cd03353">
    <property type="entry name" value="LbH_GlmU_C"/>
    <property type="match status" value="1"/>
</dbReference>
<dbReference type="FunFam" id="2.160.10.10:FF:000011">
    <property type="entry name" value="Bifunctional protein GlmU"/>
    <property type="match status" value="1"/>
</dbReference>
<dbReference type="FunFam" id="3.90.550.10:FF:000006">
    <property type="entry name" value="Bifunctional protein GlmU"/>
    <property type="match status" value="1"/>
</dbReference>
<dbReference type="Gene3D" id="2.160.10.10">
    <property type="entry name" value="Hexapeptide repeat proteins"/>
    <property type="match status" value="1"/>
</dbReference>
<dbReference type="Gene3D" id="3.90.550.10">
    <property type="entry name" value="Spore Coat Polysaccharide Biosynthesis Protein SpsA, Chain A"/>
    <property type="match status" value="1"/>
</dbReference>
<dbReference type="HAMAP" id="MF_01631">
    <property type="entry name" value="GlmU"/>
    <property type="match status" value="1"/>
</dbReference>
<dbReference type="InterPro" id="IPR005882">
    <property type="entry name" value="Bifunctional_GlmU"/>
</dbReference>
<dbReference type="InterPro" id="IPR050065">
    <property type="entry name" value="GlmU-like"/>
</dbReference>
<dbReference type="InterPro" id="IPR038009">
    <property type="entry name" value="GlmU_C_LbH"/>
</dbReference>
<dbReference type="InterPro" id="IPR001451">
    <property type="entry name" value="Hexapep"/>
</dbReference>
<dbReference type="InterPro" id="IPR018357">
    <property type="entry name" value="Hexapep_transf_CS"/>
</dbReference>
<dbReference type="InterPro" id="IPR025877">
    <property type="entry name" value="MobA-like_NTP_Trfase"/>
</dbReference>
<dbReference type="InterPro" id="IPR029044">
    <property type="entry name" value="Nucleotide-diphossugar_trans"/>
</dbReference>
<dbReference type="InterPro" id="IPR011004">
    <property type="entry name" value="Trimer_LpxA-like_sf"/>
</dbReference>
<dbReference type="NCBIfam" id="TIGR01173">
    <property type="entry name" value="glmU"/>
    <property type="match status" value="1"/>
</dbReference>
<dbReference type="NCBIfam" id="NF006986">
    <property type="entry name" value="PRK09451.1"/>
    <property type="match status" value="1"/>
</dbReference>
<dbReference type="PANTHER" id="PTHR43584:SF3">
    <property type="entry name" value="BIFUNCTIONAL PROTEIN GLMU"/>
    <property type="match status" value="1"/>
</dbReference>
<dbReference type="PANTHER" id="PTHR43584">
    <property type="entry name" value="NUCLEOTIDYL TRANSFERASE"/>
    <property type="match status" value="1"/>
</dbReference>
<dbReference type="Pfam" id="PF00132">
    <property type="entry name" value="Hexapep"/>
    <property type="match status" value="1"/>
</dbReference>
<dbReference type="Pfam" id="PF12804">
    <property type="entry name" value="NTP_transf_3"/>
    <property type="match status" value="1"/>
</dbReference>
<dbReference type="SUPFAM" id="SSF53448">
    <property type="entry name" value="Nucleotide-diphospho-sugar transferases"/>
    <property type="match status" value="1"/>
</dbReference>
<dbReference type="SUPFAM" id="SSF51161">
    <property type="entry name" value="Trimeric LpxA-like enzymes"/>
    <property type="match status" value="1"/>
</dbReference>
<dbReference type="PROSITE" id="PS00101">
    <property type="entry name" value="HEXAPEP_TRANSFERASES"/>
    <property type="match status" value="1"/>
</dbReference>